<name>KKX26_OPICY</name>
<dbReference type="EMBL" id="FM998751">
    <property type="protein sequence ID" value="CAX51397.1"/>
    <property type="molecule type" value="mRNA"/>
</dbReference>
<dbReference type="GO" id="GO:0005576">
    <property type="term" value="C:extracellular region"/>
    <property type="evidence" value="ECO:0007669"/>
    <property type="project" value="UniProtKB-SubCell"/>
</dbReference>
<dbReference type="GO" id="GO:0015459">
    <property type="term" value="F:potassium channel regulator activity"/>
    <property type="evidence" value="ECO:0007669"/>
    <property type="project" value="UniProtKB-KW"/>
</dbReference>
<dbReference type="GO" id="GO:0090729">
    <property type="term" value="F:toxin activity"/>
    <property type="evidence" value="ECO:0007669"/>
    <property type="project" value="UniProtKB-KW"/>
</dbReference>
<accession>C5J893</accession>
<sequence>MKTSKMICAFLLVLVVGTFNDISGAYGEYVEDQHSFKIERRFPPCVEVCVQHTGNVKECEAACGE</sequence>
<feature type="signal peptide" evidence="3">
    <location>
        <begin position="1"/>
        <end position="27"/>
    </location>
</feature>
<feature type="propeptide" id="PRO_0000416795" evidence="1">
    <location>
        <begin position="28"/>
        <end position="39"/>
    </location>
</feature>
<feature type="peptide" id="PRO_0000413157" description="Potassium channel toxin kappa-KTx 2.6">
    <location>
        <begin position="42"/>
        <end position="65"/>
    </location>
</feature>
<feature type="disulfide bond" evidence="2">
    <location>
        <begin position="45"/>
        <end position="63"/>
    </location>
</feature>
<feature type="disulfide bond" evidence="2">
    <location>
        <begin position="49"/>
        <end position="59"/>
    </location>
</feature>
<comment type="function">
    <text evidence="1">Potassium channel inhibitor (Kv).</text>
</comment>
<comment type="subcellular location">
    <subcellularLocation>
        <location evidence="1">Secreted</location>
    </subcellularLocation>
</comment>
<comment type="tissue specificity">
    <text>Expressed by the venom gland.</text>
</comment>
<comment type="domain">
    <text evidence="2">Has the structural arrangement of two alpha-helices stabilized by disulfide bonds (CSalpha/alpha 2(S-S)).</text>
</comment>
<comment type="similarity">
    <text evidence="6">Belongs to the short scorpion toxin superfamily. Potassium channel inhibitor kappa-KTx family. Kappa-KTx 2 subfamily.</text>
</comment>
<reference key="1">
    <citation type="journal article" date="2009" name="Toxicon">
        <title>Cloning and characterization of cDNA sequences encoding for new venom peptides of the Brazilian scorpion Opisthacanthus cayaporum.</title>
        <authorList>
            <person name="Silva E.C."/>
            <person name="Camargos T.S."/>
            <person name="Maranhao A.Q."/>
            <person name="Silva-Pereira I."/>
            <person name="Silva L.P."/>
            <person name="Possani L.D."/>
            <person name="Schwartz E.F."/>
        </authorList>
    </citation>
    <scope>NUCLEOTIDE SEQUENCE [MRNA]</scope>
    <source>
        <tissue>Venom gland</tissue>
    </source>
</reference>
<reference key="2">
    <citation type="journal article" date="2012" name="Biochem. Pharmacol.">
        <title>Purification, molecular cloning and functional characterization of HelaTx1 (Heterometrus laoticus): the first member of a new kappa-KTX subfamily.</title>
        <authorList>
            <person name="Vandendriessche T."/>
            <person name="Kopljar I."/>
            <person name="Jenkins D.P."/>
            <person name="Diego-Garcia E."/>
            <person name="Abdel-Mottaleb Y."/>
            <person name="Vermassen E."/>
            <person name="Clynen E."/>
            <person name="Schoofs L."/>
            <person name="Wulff H."/>
            <person name="Snyders D."/>
            <person name="Tytgat J."/>
        </authorList>
    </citation>
    <scope>NOMENCLATURE</scope>
</reference>
<organism>
    <name type="scientific">Opisthacanthus cayaporum</name>
    <name type="common">South American scorpion</name>
    <dbReference type="NCBI Taxonomy" id="573324"/>
    <lineage>
        <taxon>Eukaryota</taxon>
        <taxon>Metazoa</taxon>
        <taxon>Ecdysozoa</taxon>
        <taxon>Arthropoda</taxon>
        <taxon>Chelicerata</taxon>
        <taxon>Arachnida</taxon>
        <taxon>Scorpiones</taxon>
        <taxon>Iurida</taxon>
        <taxon>Scorpionoidea</taxon>
        <taxon>Hemiscorpiidae</taxon>
        <taxon>Opisthacanthus</taxon>
    </lineage>
</organism>
<evidence type="ECO:0000250" key="1"/>
<evidence type="ECO:0000250" key="2">
    <source>
        <dbReference type="UniProtKB" id="P0C1Z3"/>
    </source>
</evidence>
<evidence type="ECO:0000255" key="3"/>
<evidence type="ECO:0000303" key="4">
    <source>
    </source>
</evidence>
<evidence type="ECO:0000303" key="5">
    <source>
    </source>
</evidence>
<evidence type="ECO:0000305" key="6"/>
<keyword id="KW-0165">Cleavage on pair of basic residues</keyword>
<keyword id="KW-1015">Disulfide bond</keyword>
<keyword id="KW-0872">Ion channel impairing toxin</keyword>
<keyword id="KW-0528">Neurotoxin</keyword>
<keyword id="KW-0632">Potassium channel impairing toxin</keyword>
<keyword id="KW-0964">Secreted</keyword>
<keyword id="KW-0732">Signal</keyword>
<keyword id="KW-0800">Toxin</keyword>
<keyword id="KW-1220">Voltage-gated potassium channel impairing toxin</keyword>
<protein>
    <recommendedName>
        <fullName evidence="5">Potassium channel toxin kappa-KTx 2.6</fullName>
    </recommendedName>
    <alternativeName>
        <fullName evidence="4">OcyC9</fullName>
    </alternativeName>
</protein>
<proteinExistence type="evidence at transcript level"/>